<reference key="1">
    <citation type="journal article" date="2002" name="Nature">
        <title>The genome sequence of Schizosaccharomyces pombe.</title>
        <authorList>
            <person name="Wood V."/>
            <person name="Gwilliam R."/>
            <person name="Rajandream M.A."/>
            <person name="Lyne M.H."/>
            <person name="Lyne R."/>
            <person name="Stewart A."/>
            <person name="Sgouros J.G."/>
            <person name="Peat N."/>
            <person name="Hayles J."/>
            <person name="Baker S.G."/>
            <person name="Basham D."/>
            <person name="Bowman S."/>
            <person name="Brooks K."/>
            <person name="Brown D."/>
            <person name="Brown S."/>
            <person name="Chillingworth T."/>
            <person name="Churcher C.M."/>
            <person name="Collins M."/>
            <person name="Connor R."/>
            <person name="Cronin A."/>
            <person name="Davis P."/>
            <person name="Feltwell T."/>
            <person name="Fraser A."/>
            <person name="Gentles S."/>
            <person name="Goble A."/>
            <person name="Hamlin N."/>
            <person name="Harris D.E."/>
            <person name="Hidalgo J."/>
            <person name="Hodgson G."/>
            <person name="Holroyd S."/>
            <person name="Hornsby T."/>
            <person name="Howarth S."/>
            <person name="Huckle E.J."/>
            <person name="Hunt S."/>
            <person name="Jagels K."/>
            <person name="James K.D."/>
            <person name="Jones L."/>
            <person name="Jones M."/>
            <person name="Leather S."/>
            <person name="McDonald S."/>
            <person name="McLean J."/>
            <person name="Mooney P."/>
            <person name="Moule S."/>
            <person name="Mungall K.L."/>
            <person name="Murphy L.D."/>
            <person name="Niblett D."/>
            <person name="Odell C."/>
            <person name="Oliver K."/>
            <person name="O'Neil S."/>
            <person name="Pearson D."/>
            <person name="Quail M.A."/>
            <person name="Rabbinowitsch E."/>
            <person name="Rutherford K.M."/>
            <person name="Rutter S."/>
            <person name="Saunders D."/>
            <person name="Seeger K."/>
            <person name="Sharp S."/>
            <person name="Skelton J."/>
            <person name="Simmonds M.N."/>
            <person name="Squares R."/>
            <person name="Squares S."/>
            <person name="Stevens K."/>
            <person name="Taylor K."/>
            <person name="Taylor R.G."/>
            <person name="Tivey A."/>
            <person name="Walsh S.V."/>
            <person name="Warren T."/>
            <person name="Whitehead S."/>
            <person name="Woodward J.R."/>
            <person name="Volckaert G."/>
            <person name="Aert R."/>
            <person name="Robben J."/>
            <person name="Grymonprez B."/>
            <person name="Weltjens I."/>
            <person name="Vanstreels E."/>
            <person name="Rieger M."/>
            <person name="Schaefer M."/>
            <person name="Mueller-Auer S."/>
            <person name="Gabel C."/>
            <person name="Fuchs M."/>
            <person name="Duesterhoeft A."/>
            <person name="Fritzc C."/>
            <person name="Holzer E."/>
            <person name="Moestl D."/>
            <person name="Hilbert H."/>
            <person name="Borzym K."/>
            <person name="Langer I."/>
            <person name="Beck A."/>
            <person name="Lehrach H."/>
            <person name="Reinhardt R."/>
            <person name="Pohl T.M."/>
            <person name="Eger P."/>
            <person name="Zimmermann W."/>
            <person name="Wedler H."/>
            <person name="Wambutt R."/>
            <person name="Purnelle B."/>
            <person name="Goffeau A."/>
            <person name="Cadieu E."/>
            <person name="Dreano S."/>
            <person name="Gloux S."/>
            <person name="Lelaure V."/>
            <person name="Mottier S."/>
            <person name="Galibert F."/>
            <person name="Aves S.J."/>
            <person name="Xiang Z."/>
            <person name="Hunt C."/>
            <person name="Moore K."/>
            <person name="Hurst S.M."/>
            <person name="Lucas M."/>
            <person name="Rochet M."/>
            <person name="Gaillardin C."/>
            <person name="Tallada V.A."/>
            <person name="Garzon A."/>
            <person name="Thode G."/>
            <person name="Daga R.R."/>
            <person name="Cruzado L."/>
            <person name="Jimenez J."/>
            <person name="Sanchez M."/>
            <person name="del Rey F."/>
            <person name="Benito J."/>
            <person name="Dominguez A."/>
            <person name="Revuelta J.L."/>
            <person name="Moreno S."/>
            <person name="Armstrong J."/>
            <person name="Forsburg S.L."/>
            <person name="Cerutti L."/>
            <person name="Lowe T."/>
            <person name="McCombie W.R."/>
            <person name="Paulsen I."/>
            <person name="Potashkin J."/>
            <person name="Shpakovski G.V."/>
            <person name="Ussery D."/>
            <person name="Barrell B.G."/>
            <person name="Nurse P."/>
        </authorList>
    </citation>
    <scope>NUCLEOTIDE SEQUENCE [LARGE SCALE GENOMIC DNA]</scope>
    <source>
        <strain>972 / ATCC 24843</strain>
    </source>
</reference>
<reference key="2">
    <citation type="journal article" date="2006" name="Nat. Biotechnol.">
        <title>ORFeome cloning and global analysis of protein localization in the fission yeast Schizosaccharomyces pombe.</title>
        <authorList>
            <person name="Matsuyama A."/>
            <person name="Arai R."/>
            <person name="Yashiroda Y."/>
            <person name="Shirai A."/>
            <person name="Kamata A."/>
            <person name="Sekido S."/>
            <person name="Kobayashi Y."/>
            <person name="Hashimoto A."/>
            <person name="Hamamoto M."/>
            <person name="Hiraoka Y."/>
            <person name="Horinouchi S."/>
            <person name="Yoshida M."/>
        </authorList>
    </citation>
    <scope>SUBCELLULAR LOCATION [LARGE SCALE ANALYSIS]</scope>
</reference>
<accession>Q9US57</accession>
<accession>A0AAN2H653</accession>
<accession>Q9P6M6</accession>
<name>MRX11_SCHPO</name>
<dbReference type="EMBL" id="CU329670">
    <property type="protein sequence ID" value="CAK9837722.1"/>
    <property type="molecule type" value="Genomic_DNA"/>
</dbReference>
<dbReference type="RefSeq" id="XP_001713058.1">
    <property type="nucleotide sequence ID" value="XM_001713006.1"/>
</dbReference>
<dbReference type="BioGRID" id="280595">
    <property type="interactions" value="1"/>
</dbReference>
<dbReference type="PaxDb" id="4896-SPAC1002.01.1"/>
<dbReference type="EnsemblFungi" id="SPAC1002.01.1">
    <property type="protein sequence ID" value="SPAC1002.01.1:pep"/>
    <property type="gene ID" value="SPAC1002.01"/>
</dbReference>
<dbReference type="PomBase" id="SPAC1002.01"/>
<dbReference type="VEuPathDB" id="FungiDB:SPAC1002.01"/>
<dbReference type="eggNOG" id="ENOG502S09K">
    <property type="taxonomic scope" value="Eukaryota"/>
</dbReference>
<dbReference type="HOGENOM" id="CLU_1504297_0_0_1"/>
<dbReference type="InParanoid" id="Q9US57"/>
<dbReference type="PRO" id="PR:Q9US57"/>
<dbReference type="Proteomes" id="UP000002485">
    <property type="component" value="Chromosome I"/>
</dbReference>
<dbReference type="GO" id="GO:0099617">
    <property type="term" value="C:matrix side of mitochondrial inner membrane"/>
    <property type="evidence" value="ECO:0000303"/>
    <property type="project" value="PomBase"/>
</dbReference>
<dbReference type="GO" id="GO:0005739">
    <property type="term" value="C:mitochondrion"/>
    <property type="evidence" value="ECO:0007005"/>
    <property type="project" value="PomBase"/>
</dbReference>
<dbReference type="GO" id="GO:0140053">
    <property type="term" value="P:mitochondrial gene expression"/>
    <property type="evidence" value="ECO:0000303"/>
    <property type="project" value="PomBase"/>
</dbReference>
<dbReference type="InterPro" id="IPR018811">
    <property type="entry name" value="Mrx11"/>
</dbReference>
<dbReference type="PANTHER" id="PTHR28002">
    <property type="entry name" value="MIOREX COMPLEX COMPONENT 11"/>
    <property type="match status" value="1"/>
</dbReference>
<dbReference type="PANTHER" id="PTHR28002:SF1">
    <property type="entry name" value="MIOREX COMPLEX COMPONENT 11"/>
    <property type="match status" value="1"/>
</dbReference>
<dbReference type="Pfam" id="PF10306">
    <property type="entry name" value="FLILHELTA"/>
    <property type="match status" value="1"/>
</dbReference>
<protein>
    <recommendedName>
        <fullName>MIOREX complex component 11</fullName>
    </recommendedName>
</protein>
<sequence>MLPPTIRISGLAKTLHIPSRSPLQALKGSFILLNKRKFHYSPFILQEKVQSSNHTIRSDTKLWKRLLKITGKQAHQFKDKPFSHIFAFLFLHELSAILPLPIFFFIFHSLDWTPTGLPGEYLQKGSHVAASIFAKLGYNLPLEKVSKTLLDGAAAYAVVKVC</sequence>
<gene>
    <name type="primary">mrx11</name>
    <name evidence="5" type="ORF">SPAC1002.01</name>
    <name type="ORF">SPAC1610.05</name>
</gene>
<feature type="transit peptide" description="Mitochondrion" evidence="2">
    <location>
        <begin position="1"/>
        <end position="45"/>
    </location>
</feature>
<feature type="chain" id="PRO_0000116800" description="MIOREX complex component 11" evidence="2">
    <location>
        <begin position="46"/>
        <end position="162"/>
    </location>
</feature>
<feature type="topological domain" description="Mitochondrial matrix" evidence="1">
    <location>
        <begin position="46"/>
        <end position="84"/>
    </location>
</feature>
<feature type="transmembrane region" description="Helical" evidence="2">
    <location>
        <begin position="85"/>
        <end position="105"/>
    </location>
</feature>
<feature type="topological domain" description="Mitochondrial intermembrane" evidence="1">
    <location>
        <begin position="106"/>
        <end position="124"/>
    </location>
</feature>
<feature type="transmembrane region" description="Helical" evidence="2">
    <location>
        <begin position="125"/>
        <end position="142"/>
    </location>
</feature>
<feature type="topological domain" description="Mitochondrial matrix" evidence="1">
    <location>
        <begin position="143"/>
        <end position="162"/>
    </location>
</feature>
<comment type="function">
    <text evidence="1">Component of MIOREX complexes, large expressome-like assemblies of ribosomes with factors involved in all the steps of post-transcriptional gene expression.</text>
</comment>
<comment type="subunit">
    <text evidence="1">Associates with the mitochondrial ribosome.</text>
</comment>
<comment type="subcellular location">
    <subcellularLocation>
        <location evidence="3">Mitochondrion</location>
    </subcellularLocation>
    <subcellularLocation>
        <location evidence="1">Mitochondrion inner membrane</location>
        <topology evidence="2">Multi-pass membrane protein</topology>
    </subcellularLocation>
</comment>
<comment type="similarity">
    <text evidence="4">Belongs to the MRX11 family.</text>
</comment>
<keyword id="KW-0472">Membrane</keyword>
<keyword id="KW-0496">Mitochondrion</keyword>
<keyword id="KW-0999">Mitochondrion inner membrane</keyword>
<keyword id="KW-1185">Reference proteome</keyword>
<keyword id="KW-0809">Transit peptide</keyword>
<keyword id="KW-0812">Transmembrane</keyword>
<keyword id="KW-1133">Transmembrane helix</keyword>
<proteinExistence type="inferred from homology"/>
<evidence type="ECO:0000250" key="1">
    <source>
        <dbReference type="UniProtKB" id="Q03079"/>
    </source>
</evidence>
<evidence type="ECO:0000255" key="2"/>
<evidence type="ECO:0000269" key="3">
    <source>
    </source>
</evidence>
<evidence type="ECO:0000305" key="4"/>
<evidence type="ECO:0000312" key="5">
    <source>
        <dbReference type="PomBase" id="SPAC1002.01"/>
    </source>
</evidence>
<organism>
    <name type="scientific">Schizosaccharomyces pombe (strain 972 / ATCC 24843)</name>
    <name type="common">Fission yeast</name>
    <dbReference type="NCBI Taxonomy" id="284812"/>
    <lineage>
        <taxon>Eukaryota</taxon>
        <taxon>Fungi</taxon>
        <taxon>Dikarya</taxon>
        <taxon>Ascomycota</taxon>
        <taxon>Taphrinomycotina</taxon>
        <taxon>Schizosaccharomycetes</taxon>
        <taxon>Schizosaccharomycetales</taxon>
        <taxon>Schizosaccharomycetaceae</taxon>
        <taxon>Schizosaccharomyces</taxon>
    </lineage>
</organism>